<sequence>MKKIAGWFTLAVLFVLYYIVPLPGRLLWQPDETRYAEISREMLASGDWIVPHFLGLRYFEKPVAGYWVNNLGQWLFGDGNFAVRFGAVLATVLSALLVFWLARRLLSGPRPAVVAVLIYLTSFLVYGVGSYAVLDPIFTLWMTAAMCSFWLGEQASSARGKAGGYILLGLACGMGFMTKGFLALAIPVIAVLPWVIAQRRWKSLFCFGPLAVLSAILISLPWVLAIAQHEPDYWRYFFWVEHIQRFAEDNAQHKAPFWYYLPILLIGLLPWLGLLPGALREGWRGRVSQGGDFYLLGWAVMPFLLFSIAKGKLPTYILPCFAPLAILMAGYVQRLTGENGKALRINGLINLLVGLGGMAAILLVLAPWGITGHPLFGAHEIGKVILGTIAFGVWALFGALSLYHSRRYWRWSAACLLGVALLIGTALPQQVMESKQPQALIQAAMPQLQASRYILSDSVGVAAGLAWELKRSDIYMYDKTGELQYGLSYPDAAGHLVKAEQFPAWLAEHRKQGAISLVLLLPRDGQINPALPSADMTLRKGRFLLLQYQQQP</sequence>
<reference key="1">
    <citation type="submission" date="2009-03" db="EMBL/GenBank/DDBJ databases">
        <title>Complete genome sequence of Edwardsiella ictaluri 93-146.</title>
        <authorList>
            <person name="Williams M.L."/>
            <person name="Gillaspy A.F."/>
            <person name="Dyer D.W."/>
            <person name="Thune R.L."/>
            <person name="Waldbieser G.C."/>
            <person name="Schuster S.C."/>
            <person name="Gipson J."/>
            <person name="Zaitshik J."/>
            <person name="Landry C."/>
            <person name="Lawrence M.L."/>
        </authorList>
    </citation>
    <scope>NUCLEOTIDE SEQUENCE [LARGE SCALE GENOMIC DNA]</scope>
    <source>
        <strain>93-146</strain>
    </source>
</reference>
<proteinExistence type="inferred from homology"/>
<feature type="chain" id="PRO_1000213727" description="Undecaprenyl phosphate-alpha-4-amino-4-deoxy-L-arabinose arabinosyl transferase">
    <location>
        <begin position="1"/>
        <end position="552"/>
    </location>
</feature>
<feature type="transmembrane region" description="Helical" evidence="1">
    <location>
        <begin position="4"/>
        <end position="24"/>
    </location>
</feature>
<feature type="transmembrane region" description="Helical" evidence="1">
    <location>
        <begin position="81"/>
        <end position="101"/>
    </location>
</feature>
<feature type="transmembrane region" description="Helical" evidence="1">
    <location>
        <begin position="113"/>
        <end position="133"/>
    </location>
</feature>
<feature type="transmembrane region" description="Helical" evidence="1">
    <location>
        <begin position="176"/>
        <end position="196"/>
    </location>
</feature>
<feature type="transmembrane region" description="Helical" evidence="1">
    <location>
        <begin position="207"/>
        <end position="227"/>
    </location>
</feature>
<feature type="transmembrane region" description="Helical" evidence="1">
    <location>
        <begin position="255"/>
        <end position="275"/>
    </location>
</feature>
<feature type="transmembrane region" description="Helical" evidence="1">
    <location>
        <begin position="289"/>
        <end position="309"/>
    </location>
</feature>
<feature type="transmembrane region" description="Helical" evidence="1">
    <location>
        <begin position="313"/>
        <end position="333"/>
    </location>
</feature>
<feature type="transmembrane region" description="Helical" evidence="1">
    <location>
        <begin position="351"/>
        <end position="371"/>
    </location>
</feature>
<feature type="transmembrane region" description="Helical" evidence="1">
    <location>
        <begin position="384"/>
        <end position="404"/>
    </location>
</feature>
<feature type="transmembrane region" description="Helical" evidence="1">
    <location>
        <begin position="411"/>
        <end position="431"/>
    </location>
</feature>
<organism>
    <name type="scientific">Edwardsiella ictaluri (strain 93-146)</name>
    <dbReference type="NCBI Taxonomy" id="634503"/>
    <lineage>
        <taxon>Bacteria</taxon>
        <taxon>Pseudomonadati</taxon>
        <taxon>Pseudomonadota</taxon>
        <taxon>Gammaproteobacteria</taxon>
        <taxon>Enterobacterales</taxon>
        <taxon>Hafniaceae</taxon>
        <taxon>Edwardsiella</taxon>
    </lineage>
</organism>
<dbReference type="EC" id="2.4.2.43" evidence="1"/>
<dbReference type="EMBL" id="CP001600">
    <property type="protein sequence ID" value="ACR68606.1"/>
    <property type="molecule type" value="Genomic_DNA"/>
</dbReference>
<dbReference type="RefSeq" id="WP_015870771.1">
    <property type="nucleotide sequence ID" value="NZ_CP169062.1"/>
</dbReference>
<dbReference type="SMR" id="C5BDQ8"/>
<dbReference type="STRING" id="67780.B6E78_00430"/>
<dbReference type="CAZy" id="GT83">
    <property type="family name" value="Glycosyltransferase Family 83"/>
</dbReference>
<dbReference type="GeneID" id="69538425"/>
<dbReference type="KEGG" id="eic:NT01EI_1417"/>
<dbReference type="PATRIC" id="fig|634503.3.peg.1277"/>
<dbReference type="HOGENOM" id="CLU_019200_2_1_6"/>
<dbReference type="OrthoDB" id="9775035at2"/>
<dbReference type="UniPathway" id="UPA00037"/>
<dbReference type="Proteomes" id="UP000001485">
    <property type="component" value="Chromosome"/>
</dbReference>
<dbReference type="GO" id="GO:0005886">
    <property type="term" value="C:plasma membrane"/>
    <property type="evidence" value="ECO:0007669"/>
    <property type="project" value="UniProtKB-SubCell"/>
</dbReference>
<dbReference type="GO" id="GO:0103015">
    <property type="term" value="F:4-amino-4-deoxy-L-arabinose transferase activity"/>
    <property type="evidence" value="ECO:0007669"/>
    <property type="project" value="UniProtKB-EC"/>
</dbReference>
<dbReference type="GO" id="GO:0000030">
    <property type="term" value="F:mannosyltransferase activity"/>
    <property type="evidence" value="ECO:0007669"/>
    <property type="project" value="InterPro"/>
</dbReference>
<dbReference type="GO" id="GO:0009245">
    <property type="term" value="P:lipid A biosynthetic process"/>
    <property type="evidence" value="ECO:0007669"/>
    <property type="project" value="UniProtKB-UniRule"/>
</dbReference>
<dbReference type="GO" id="GO:0009103">
    <property type="term" value="P:lipopolysaccharide biosynthetic process"/>
    <property type="evidence" value="ECO:0007669"/>
    <property type="project" value="UniProtKB-KW"/>
</dbReference>
<dbReference type="GO" id="GO:0006493">
    <property type="term" value="P:protein O-linked glycosylation"/>
    <property type="evidence" value="ECO:0007669"/>
    <property type="project" value="InterPro"/>
</dbReference>
<dbReference type="GO" id="GO:0010041">
    <property type="term" value="P:response to iron(III) ion"/>
    <property type="evidence" value="ECO:0007669"/>
    <property type="project" value="TreeGrafter"/>
</dbReference>
<dbReference type="HAMAP" id="MF_01165">
    <property type="entry name" value="ArnT_transfer"/>
    <property type="match status" value="1"/>
</dbReference>
<dbReference type="InterPro" id="IPR022839">
    <property type="entry name" value="ArnT_tfrase"/>
</dbReference>
<dbReference type="InterPro" id="IPR003342">
    <property type="entry name" value="Glyco_trans_39/83"/>
</dbReference>
<dbReference type="InterPro" id="IPR050297">
    <property type="entry name" value="LipidA_mod_glycosyltrf_83"/>
</dbReference>
<dbReference type="NCBIfam" id="NF009784">
    <property type="entry name" value="PRK13279.1"/>
    <property type="match status" value="1"/>
</dbReference>
<dbReference type="PANTHER" id="PTHR33908">
    <property type="entry name" value="MANNOSYLTRANSFERASE YKCB-RELATED"/>
    <property type="match status" value="1"/>
</dbReference>
<dbReference type="PANTHER" id="PTHR33908:SF3">
    <property type="entry name" value="UNDECAPRENYL PHOSPHATE-ALPHA-4-AMINO-4-DEOXY-L-ARABINOSE ARABINOSYL TRANSFERASE"/>
    <property type="match status" value="1"/>
</dbReference>
<dbReference type="Pfam" id="PF02366">
    <property type="entry name" value="PMT"/>
    <property type="match status" value="1"/>
</dbReference>
<accession>C5BDQ8</accession>
<name>ARNT_EDWI9</name>
<keyword id="KW-0997">Cell inner membrane</keyword>
<keyword id="KW-1003">Cell membrane</keyword>
<keyword id="KW-0328">Glycosyltransferase</keyword>
<keyword id="KW-0441">Lipid A biosynthesis</keyword>
<keyword id="KW-0444">Lipid biosynthesis</keyword>
<keyword id="KW-0443">Lipid metabolism</keyword>
<keyword id="KW-0448">Lipopolysaccharide biosynthesis</keyword>
<keyword id="KW-0472">Membrane</keyword>
<keyword id="KW-0808">Transferase</keyword>
<keyword id="KW-0812">Transmembrane</keyword>
<keyword id="KW-1133">Transmembrane helix</keyword>
<evidence type="ECO:0000255" key="1">
    <source>
        <dbReference type="HAMAP-Rule" id="MF_01165"/>
    </source>
</evidence>
<gene>
    <name evidence="1" type="primary">arnT</name>
    <name type="ordered locus">NT01EI_1417</name>
</gene>
<comment type="function">
    <text evidence="1">Catalyzes the transfer of the L-Ara4N moiety of the glycolipid undecaprenyl phosphate-alpha-L-Ara4N to lipid A. The modified arabinose is attached to lipid A and is required for resistance to polymyxin and cationic antimicrobial peptides.</text>
</comment>
<comment type="catalytic activity">
    <reaction evidence="1">
        <text>4-amino-4-deoxy-alpha-L-arabinopyranosyl di-trans,octa-cis-undecaprenyl phosphate + lipid IVA = lipid IIA + di-trans,octa-cis-undecaprenyl phosphate.</text>
        <dbReference type="EC" id="2.4.2.43"/>
    </reaction>
</comment>
<comment type="pathway">
    <text evidence="1">Lipopolysaccharide metabolism; 4-amino-4-deoxy-beta-L-arabinose-lipid A biosynthesis.</text>
</comment>
<comment type="subcellular location">
    <subcellularLocation>
        <location evidence="1">Cell inner membrane</location>
        <topology evidence="1">Multi-pass membrane protein</topology>
    </subcellularLocation>
</comment>
<comment type="similarity">
    <text evidence="1">Belongs to the glycosyltransferase 83 family.</text>
</comment>
<protein>
    <recommendedName>
        <fullName evidence="1">Undecaprenyl phosphate-alpha-4-amino-4-deoxy-L-arabinose arabinosyl transferase</fullName>
        <ecNumber evidence="1">2.4.2.43</ecNumber>
    </recommendedName>
    <alternativeName>
        <fullName evidence="1">4-amino-4-deoxy-L-arabinose lipid A transferase</fullName>
    </alternativeName>
    <alternativeName>
        <fullName evidence="1">Lipid IV(A) 4-amino-4-deoxy-L-arabinosyltransferase</fullName>
    </alternativeName>
    <alternativeName>
        <fullName evidence="1">Undecaprenyl phosphate-alpha-L-Ara4N transferase</fullName>
    </alternativeName>
</protein>